<protein>
    <recommendedName>
        <fullName>Myosin-2A</fullName>
    </recommendedName>
    <alternativeName>
        <fullName>Class V unconventional myosin MYO2A</fullName>
    </alternativeName>
    <alternativeName>
        <fullName>Type V myosin heavy chain MYO2A</fullName>
        <shortName>Myosin V MYO2A</shortName>
    </alternativeName>
</protein>
<sequence>MSFEVGTRCWYPSKEQGWIGAEVTKNDLKDGTYFMELTLEDNEVVNVETKDLTNEKDPSLPLLRNPPILESTEDLTTLSYLNEPAVLHAIKQRYSQLNIYTYSGIVLIATNPFDRMDQLYSQDMIQAYSGKRRGEIEPHLFAIAEEAYRLMKNDKQNQTIVVSGESGAGKTVSAKYIMRYFASCDEENSSNMGNLQHTAEMSETEERILATNPIMEAFGNAKTTRNDNSSRFGKYLEILFDKETAIIGAKMRTYLLERSRLVYQPKTERNYHIFYQILAGLPEDVKQELHLTKADDYFYMNQGGEPEIAGIDDVSEYGITIKALTLVGVAPETQQHIFKILAALLHIGNIEIKKTRNDSSLSSDEPNLKIACELLGVDPSNFAKWITKKQIVTRSEKIVSNLNYSQALVARDSVAKFIYSALFDWLVTNINTVLCNPAVLDQIHSFIGVLDIYGFEHFEKNSFEQFCINYANEKLQQEFNQHVFKLEQEEYIKEEIEWSFIEFNDNQPCIDLIENKLGILSLLDEESRLPAGSDESWTQKLYQTLDKPPTNKVFSKPRFGQTKFVVSHYALDVAYDVEGFIEKNRDTVSDGHLEVLKATTNDTLSTILESVEESARKVEEAKKNAASQDQKQLKKPTPIRQVQRKPTLGSMFKLSLIELMQTINSTNVHYIRCIKPNGEKEAWKFDNLMVLSQLRACGVLETIRISCAGFPSRWTFNEFILRYYILIPPVEWAPIFQKNDLTEQDVINLCKKILAATVQDKEKYQIGNTKIFFKAGMLAYFEKLRSTKMNSAIVLIQKHIRSKYYRKQYMLMKASLSLLGAYSKGTVIRQRVEYELEQHAATLIQTMYRGYSKRSYISGVISSIVKLQSRIREELEQREMQSKYESNAAISIQSRIRAFVPRKAYESKRRDTIVVQSLIRRRIAQRDFKKLKADAKSVHHLKEVSYKLENKVIQLTQNLAAKVKENRQLSKRLEELQATMVTVSELQDQLEAQKMENQKALADQKDGFVLDSKSLKDQLIKANKDVESVKFELATLTAKYTEMEAESKNQLDELERTKTLLTESKTQNSDLYSEIKSLKEELAHLQTSIALGTVTTNTNIVPHTPSRENRMPSGHMRAAEENISPNQLKSIPSDTAADHVSVNGYGMDDDIINTNTLTQINEELYRLLEGTDVLNNEITEGLLKGFQVPDAGVAIQLSRRDVVYPARILIIVLSEMWRFGLTKQSESFLAQVLTTIQKVVTTLKGIDLIPSGAFWLANVRELYSFVVFAQHSILTEESFKKGMNDEEYNEYVSLVTELKEDFESLSYNIYNIWLKKLQKDLQKKAINAVVVSESLPGFNASESNGFLNKIFNSGEEYTMDDILTFFNNIFWCMKSFHIENEVFRTVIITLLNYVDTICFNDLIMKRNFLSWKRGLQLNYNVTRLEEWCKTHGLPDGAQYLQHLIQTAKLLQLRKYTIEDIDMVRGICSSLSPAQLQKLISQYHVADYESPIPQDILKYVADIVKKESTSAHNDIFLHPETGPFNDPFVAVKTRKFDQVEAYIPSWLVLPVTKRIVDLVAQQVTVPDA</sequence>
<evidence type="ECO:0000250" key="1"/>
<evidence type="ECO:0000255" key="2"/>
<evidence type="ECO:0000255" key="3">
    <source>
        <dbReference type="PROSITE-ProRule" id="PRU00116"/>
    </source>
</evidence>
<evidence type="ECO:0000255" key="4">
    <source>
        <dbReference type="PROSITE-ProRule" id="PRU00503"/>
    </source>
</evidence>
<evidence type="ECO:0000255" key="5">
    <source>
        <dbReference type="PROSITE-ProRule" id="PRU00782"/>
    </source>
</evidence>
<evidence type="ECO:0000255" key="6">
    <source>
        <dbReference type="PROSITE-ProRule" id="PRU01190"/>
    </source>
</evidence>
<evidence type="ECO:0000256" key="7">
    <source>
        <dbReference type="SAM" id="MobiDB-lite"/>
    </source>
</evidence>
<evidence type="ECO:0000305" key="8"/>
<name>MYO2A_NAUCA</name>
<keyword id="KW-0009">Actin-binding</keyword>
<keyword id="KW-0067">ATP-binding</keyword>
<keyword id="KW-0131">Cell cycle</keyword>
<keyword id="KW-0175">Coiled coil</keyword>
<keyword id="KW-0505">Motor protein</keyword>
<keyword id="KW-0518">Myosin</keyword>
<keyword id="KW-0547">Nucleotide-binding</keyword>
<keyword id="KW-0653">Protein transport</keyword>
<keyword id="KW-1185">Reference proteome</keyword>
<keyword id="KW-0677">Repeat</keyword>
<keyword id="KW-0813">Transport</keyword>
<feature type="chain" id="PRO_0000123486" description="Myosin-2A">
    <location>
        <begin position="1"/>
        <end position="1567"/>
    </location>
</feature>
<feature type="domain" description="Myosin N-terminal SH3-like" evidence="6">
    <location>
        <begin position="4"/>
        <end position="57"/>
    </location>
</feature>
<feature type="domain" description="Myosin motor" evidence="5">
    <location>
        <begin position="70"/>
        <end position="786"/>
    </location>
</feature>
<feature type="domain" description="IQ 1" evidence="3">
    <location>
        <begin position="789"/>
        <end position="818"/>
    </location>
</feature>
<feature type="domain" description="IQ 2" evidence="3">
    <location>
        <begin position="812"/>
        <end position="836"/>
    </location>
</feature>
<feature type="domain" description="IQ 3" evidence="3">
    <location>
        <begin position="837"/>
        <end position="859"/>
    </location>
</feature>
<feature type="domain" description="IQ 4" evidence="3">
    <location>
        <begin position="860"/>
        <end position="884"/>
    </location>
</feature>
<feature type="domain" description="IQ 5" evidence="3">
    <location>
        <begin position="885"/>
        <end position="907"/>
    </location>
</feature>
<feature type="domain" description="IQ 6" evidence="3">
    <location>
        <begin position="908"/>
        <end position="937"/>
    </location>
</feature>
<feature type="domain" description="Dilute" evidence="4">
    <location>
        <begin position="1230"/>
        <end position="1505"/>
    </location>
</feature>
<feature type="region of interest" description="Actin-binding" evidence="1">
    <location>
        <begin position="446"/>
        <end position="526"/>
    </location>
</feature>
<feature type="region of interest" description="Disordered" evidence="7">
    <location>
        <begin position="619"/>
        <end position="640"/>
    </location>
</feature>
<feature type="region of interest" description="Non alpha-helical, tail domain">
    <location>
        <begin position="1092"/>
        <end position="1567"/>
    </location>
</feature>
<feature type="coiled-coil region" evidence="2">
    <location>
        <begin position="947"/>
        <end position="1091"/>
    </location>
</feature>
<feature type="binding site" evidence="2">
    <location>
        <begin position="164"/>
        <end position="171"/>
    </location>
    <ligand>
        <name>ATP</name>
        <dbReference type="ChEBI" id="CHEBI:30616"/>
    </ligand>
</feature>
<feature type="sequence conflict" description="In Ref. 3; AAO32505." evidence="8" ref="3">
    <original>FDKETAIIGAKMR</original>
    <variation>LLKEFHHMEFSAE</variation>
    <location>
        <begin position="240"/>
        <end position="252"/>
    </location>
</feature>
<feature type="sequence conflict" description="In Ref. 3; AAO32506." evidence="8" ref="3">
    <original>YQPKTERNYHIFYQ</original>
    <variation>SSAELHVVEFYFLS</variation>
    <location>
        <begin position="263"/>
        <end position="276"/>
    </location>
</feature>
<feature type="sequence conflict" description="In Ref. 3; AAO32506." evidence="8" ref="3">
    <original>FE</original>
    <variation>LK</variation>
    <location>
        <begin position="781"/>
        <end position="782"/>
    </location>
</feature>
<proteinExistence type="inferred from homology"/>
<dbReference type="EMBL" id="AACF01000056">
    <property type="status" value="NOT_ANNOTATED_CDS"/>
    <property type="molecule type" value="Genomic_DNA"/>
</dbReference>
<dbReference type="EMBL" id="HE576760">
    <property type="protein sequence ID" value="CCC71681.1"/>
    <property type="molecule type" value="Genomic_DNA"/>
</dbReference>
<dbReference type="EMBL" id="AY144942">
    <property type="protein sequence ID" value="AAO32505.1"/>
    <property type="molecule type" value="Genomic_DNA"/>
</dbReference>
<dbReference type="EMBL" id="AY144943">
    <property type="protein sequence ID" value="AAO32506.1"/>
    <property type="molecule type" value="Genomic_DNA"/>
</dbReference>
<dbReference type="SMR" id="Q875X3"/>
<dbReference type="FunCoup" id="Q875X3">
    <property type="interactions" value="722"/>
</dbReference>
<dbReference type="STRING" id="1064592.Q875X3"/>
<dbReference type="KEGG" id="ncs:NCAS_0I00130"/>
<dbReference type="eggNOG" id="KOG0160">
    <property type="taxonomic scope" value="Eukaryota"/>
</dbReference>
<dbReference type="HOGENOM" id="CLU_000192_3_1_1"/>
<dbReference type="InParanoid" id="Q875X3"/>
<dbReference type="OMA" id="DCYRAMI"/>
<dbReference type="OrthoDB" id="6108017at2759"/>
<dbReference type="Proteomes" id="UP000001640">
    <property type="component" value="Chromosome 9"/>
</dbReference>
<dbReference type="GO" id="GO:0032432">
    <property type="term" value="C:actin filament bundle"/>
    <property type="evidence" value="ECO:0007669"/>
    <property type="project" value="EnsemblFungi"/>
</dbReference>
<dbReference type="GO" id="GO:0005935">
    <property type="term" value="C:cellular bud neck"/>
    <property type="evidence" value="ECO:0007669"/>
    <property type="project" value="EnsemblFungi"/>
</dbReference>
<dbReference type="GO" id="GO:0005934">
    <property type="term" value="C:cellular bud tip"/>
    <property type="evidence" value="ECO:0007669"/>
    <property type="project" value="EnsemblFungi"/>
</dbReference>
<dbReference type="GO" id="GO:0031941">
    <property type="term" value="C:filamentous actin"/>
    <property type="evidence" value="ECO:0007669"/>
    <property type="project" value="EnsemblFungi"/>
</dbReference>
<dbReference type="GO" id="GO:0000329">
    <property type="term" value="C:fungal-type vacuole membrane"/>
    <property type="evidence" value="ECO:0007669"/>
    <property type="project" value="EnsemblFungi"/>
</dbReference>
<dbReference type="GO" id="GO:0000131">
    <property type="term" value="C:incipient cellular bud site"/>
    <property type="evidence" value="ECO:0007669"/>
    <property type="project" value="EnsemblFungi"/>
</dbReference>
<dbReference type="GO" id="GO:0043332">
    <property type="term" value="C:mating projection tip"/>
    <property type="evidence" value="ECO:0007669"/>
    <property type="project" value="EnsemblFungi"/>
</dbReference>
<dbReference type="GO" id="GO:0034993">
    <property type="term" value="C:meiotic nuclear membrane microtubule tethering complex"/>
    <property type="evidence" value="ECO:0007669"/>
    <property type="project" value="EnsemblFungi"/>
</dbReference>
<dbReference type="GO" id="GO:0071563">
    <property type="term" value="C:Myo2p-Vac17p-Vac8p transport complex"/>
    <property type="evidence" value="ECO:0007669"/>
    <property type="project" value="EnsemblFungi"/>
</dbReference>
<dbReference type="GO" id="GO:0016459">
    <property type="term" value="C:myosin complex"/>
    <property type="evidence" value="ECO:0007669"/>
    <property type="project" value="UniProtKB-KW"/>
</dbReference>
<dbReference type="GO" id="GO:0030133">
    <property type="term" value="C:transport vesicle"/>
    <property type="evidence" value="ECO:0007669"/>
    <property type="project" value="EnsemblFungi"/>
</dbReference>
<dbReference type="GO" id="GO:0051015">
    <property type="term" value="F:actin filament binding"/>
    <property type="evidence" value="ECO:0007669"/>
    <property type="project" value="EnsemblFungi"/>
</dbReference>
<dbReference type="GO" id="GO:0005524">
    <property type="term" value="F:ATP binding"/>
    <property type="evidence" value="ECO:0007669"/>
    <property type="project" value="UniProtKB-KW"/>
</dbReference>
<dbReference type="GO" id="GO:0005516">
    <property type="term" value="F:calmodulin binding"/>
    <property type="evidence" value="ECO:0007669"/>
    <property type="project" value="EnsemblFungi"/>
</dbReference>
<dbReference type="GO" id="GO:0000146">
    <property type="term" value="F:microfilament motor activity"/>
    <property type="evidence" value="ECO:0007669"/>
    <property type="project" value="EnsemblFungi"/>
</dbReference>
<dbReference type="GO" id="GO:0031267">
    <property type="term" value="F:small GTPase binding"/>
    <property type="evidence" value="ECO:0007669"/>
    <property type="project" value="EnsemblFungi"/>
</dbReference>
<dbReference type="GO" id="GO:0007015">
    <property type="term" value="P:actin filament organization"/>
    <property type="evidence" value="ECO:0007669"/>
    <property type="project" value="TreeGrafter"/>
</dbReference>
<dbReference type="GO" id="GO:0000132">
    <property type="term" value="P:establishment of mitotic spindle orientation"/>
    <property type="evidence" value="ECO:0007669"/>
    <property type="project" value="EnsemblFungi"/>
</dbReference>
<dbReference type="GO" id="GO:0048313">
    <property type="term" value="P:Golgi inheritance"/>
    <property type="evidence" value="ECO:0007669"/>
    <property type="project" value="EnsemblFungi"/>
</dbReference>
<dbReference type="GO" id="GO:0048312">
    <property type="term" value="P:intracellular distribution of mitochondria"/>
    <property type="evidence" value="ECO:0007669"/>
    <property type="project" value="EnsemblFungi"/>
</dbReference>
<dbReference type="GO" id="GO:0007107">
    <property type="term" value="P:membrane addition at site of cytokinesis"/>
    <property type="evidence" value="ECO:0007669"/>
    <property type="project" value="EnsemblFungi"/>
</dbReference>
<dbReference type="GO" id="GO:0000001">
    <property type="term" value="P:mitochondrion inheritance"/>
    <property type="evidence" value="ECO:0007669"/>
    <property type="project" value="EnsemblFungi"/>
</dbReference>
<dbReference type="GO" id="GO:0045033">
    <property type="term" value="P:peroxisome inheritance"/>
    <property type="evidence" value="ECO:0007669"/>
    <property type="project" value="EnsemblFungi"/>
</dbReference>
<dbReference type="GO" id="GO:0015031">
    <property type="term" value="P:protein transport"/>
    <property type="evidence" value="ECO:0007669"/>
    <property type="project" value="UniProtKB-KW"/>
</dbReference>
<dbReference type="GO" id="GO:0000011">
    <property type="term" value="P:vacuole inheritance"/>
    <property type="evidence" value="ECO:0007669"/>
    <property type="project" value="EnsemblFungi"/>
</dbReference>
<dbReference type="GO" id="GO:0006904">
    <property type="term" value="P:vesicle docking involved in exocytosis"/>
    <property type="evidence" value="ECO:0007669"/>
    <property type="project" value="EnsemblFungi"/>
</dbReference>
<dbReference type="GO" id="GO:0030050">
    <property type="term" value="P:vesicle transport along actin filament"/>
    <property type="evidence" value="ECO:0007669"/>
    <property type="project" value="EnsemblFungi"/>
</dbReference>
<dbReference type="CDD" id="cd15480">
    <property type="entry name" value="fMyo2p_CBD"/>
    <property type="match status" value="1"/>
</dbReference>
<dbReference type="CDD" id="cd01380">
    <property type="entry name" value="MYSc_Myo5"/>
    <property type="match status" value="1"/>
</dbReference>
<dbReference type="FunFam" id="1.10.10.820:FF:000001">
    <property type="entry name" value="Myosin heavy chain"/>
    <property type="match status" value="1"/>
</dbReference>
<dbReference type="Gene3D" id="1.10.10.820">
    <property type="match status" value="1"/>
</dbReference>
<dbReference type="Gene3D" id="1.20.5.190">
    <property type="match status" value="2"/>
</dbReference>
<dbReference type="Gene3D" id="1.20.58.530">
    <property type="match status" value="1"/>
</dbReference>
<dbReference type="Gene3D" id="6.20.240.20">
    <property type="match status" value="1"/>
</dbReference>
<dbReference type="Gene3D" id="3.40.850.10">
    <property type="entry name" value="Kinesin motor domain"/>
    <property type="match status" value="1"/>
</dbReference>
<dbReference type="Gene3D" id="1.20.120.720">
    <property type="entry name" value="Myosin VI head, motor domain, U50 subdomain"/>
    <property type="match status" value="1"/>
</dbReference>
<dbReference type="InterPro" id="IPR002710">
    <property type="entry name" value="Dilute_dom"/>
</dbReference>
<dbReference type="InterPro" id="IPR046943">
    <property type="entry name" value="Fungal_Myo2/2A_CBD"/>
</dbReference>
<dbReference type="InterPro" id="IPR000048">
    <property type="entry name" value="IQ_motif_EF-hand-BS"/>
</dbReference>
<dbReference type="InterPro" id="IPR036961">
    <property type="entry name" value="Kinesin_motor_dom_sf"/>
</dbReference>
<dbReference type="InterPro" id="IPR001609">
    <property type="entry name" value="Myosin_head_motor_dom-like"/>
</dbReference>
<dbReference type="InterPro" id="IPR004009">
    <property type="entry name" value="Myosin_N"/>
</dbReference>
<dbReference type="InterPro" id="IPR036103">
    <property type="entry name" value="MYSc_Myo5"/>
</dbReference>
<dbReference type="InterPro" id="IPR027417">
    <property type="entry name" value="P-loop_NTPase"/>
</dbReference>
<dbReference type="PANTHER" id="PTHR13140:SF706">
    <property type="entry name" value="DILUTE CLASS UNCONVENTIONAL MYOSIN, ISOFORM C"/>
    <property type="match status" value="1"/>
</dbReference>
<dbReference type="PANTHER" id="PTHR13140">
    <property type="entry name" value="MYOSIN"/>
    <property type="match status" value="1"/>
</dbReference>
<dbReference type="Pfam" id="PF01843">
    <property type="entry name" value="DIL"/>
    <property type="match status" value="1"/>
</dbReference>
<dbReference type="Pfam" id="PF00063">
    <property type="entry name" value="Myosin_head"/>
    <property type="match status" value="1"/>
</dbReference>
<dbReference type="PRINTS" id="PR00193">
    <property type="entry name" value="MYOSINHEAVY"/>
</dbReference>
<dbReference type="SMART" id="SM01132">
    <property type="entry name" value="DIL"/>
    <property type="match status" value="1"/>
</dbReference>
<dbReference type="SMART" id="SM00015">
    <property type="entry name" value="IQ"/>
    <property type="match status" value="5"/>
</dbReference>
<dbReference type="SMART" id="SM00242">
    <property type="entry name" value="MYSc"/>
    <property type="match status" value="1"/>
</dbReference>
<dbReference type="SUPFAM" id="SSF50084">
    <property type="entry name" value="Myosin S1 fragment, N-terminal domain"/>
    <property type="match status" value="1"/>
</dbReference>
<dbReference type="SUPFAM" id="SSF52540">
    <property type="entry name" value="P-loop containing nucleoside triphosphate hydrolases"/>
    <property type="match status" value="2"/>
</dbReference>
<dbReference type="PROSITE" id="PS51126">
    <property type="entry name" value="DILUTE"/>
    <property type="match status" value="1"/>
</dbReference>
<dbReference type="PROSITE" id="PS50096">
    <property type="entry name" value="IQ"/>
    <property type="match status" value="4"/>
</dbReference>
<dbReference type="PROSITE" id="PS51456">
    <property type="entry name" value="MYOSIN_MOTOR"/>
    <property type="match status" value="1"/>
</dbReference>
<dbReference type="PROSITE" id="PS51844">
    <property type="entry name" value="SH3_LIKE"/>
    <property type="match status" value="1"/>
</dbReference>
<reference key="1">
    <citation type="journal article" date="2003" name="Science">
        <title>Finding functional features in Saccharomyces genomes by phylogenetic footprinting.</title>
        <authorList>
            <person name="Cliften P.F."/>
            <person name="Sudarsanam P."/>
            <person name="Desikan A."/>
            <person name="Fulton L."/>
            <person name="Fulton B."/>
            <person name="Majors J."/>
            <person name="Waterston R."/>
            <person name="Cohen B.A."/>
            <person name="Johnston M."/>
        </authorList>
    </citation>
    <scope>NUCLEOTIDE SEQUENCE [GENOMIC DNA]</scope>
    <source>
        <strain>ATCC 76901 / BCRC 22586 / CBS 4309 / NBRC 1992 / NRRL Y-12630</strain>
    </source>
</reference>
<reference key="2">
    <citation type="submission" date="2011-07" db="EMBL/GenBank/DDBJ databases">
        <title>Genome sequence of Naumovozyma castellii.</title>
        <authorList>
            <person name="Gordon J.L."/>
            <person name="Armisen D."/>
            <person name="Proux-Wera E."/>
            <person name="OhEigeartaigh S.S."/>
            <person name="Byrne K.P."/>
            <person name="Wolfe K.H."/>
        </authorList>
    </citation>
    <scope>NUCLEOTIDE SEQUENCE [LARGE SCALE GENOMIC DNA]</scope>
    <source>
        <strain>ATCC 76901 / BCRC 22586 / CBS 4309 / NBRC 1992 / NRRL Y-12630</strain>
    </source>
</reference>
<reference key="3">
    <citation type="journal article" date="2003" name="Nature">
        <title>Yeast genome duplication was followed by asynchronous differentiation of duplicated genes.</title>
        <authorList>
            <person name="Langkjaer R.B."/>
            <person name="Cliften P.F."/>
            <person name="Johnston M."/>
            <person name="Piskur J."/>
        </authorList>
    </citation>
    <scope>NUCLEOTIDE SEQUENCE [GENOMIC DNA] OF 1-252 AND 263-782</scope>
    <source>
        <strain>ATCC 76901 / BCRC 22586 / CBS 4309 / NBRC 1992 / NRRL Y-12630</strain>
    </source>
</reference>
<accession>Q875X3</accession>
<accession>G0VJK1</accession>
<accession>Q875X2</accession>
<organism>
    <name type="scientific">Naumovozyma castellii</name>
    <name type="common">Yeast</name>
    <name type="synonym">Saccharomyces castellii</name>
    <dbReference type="NCBI Taxonomy" id="27288"/>
    <lineage>
        <taxon>Eukaryota</taxon>
        <taxon>Fungi</taxon>
        <taxon>Dikarya</taxon>
        <taxon>Ascomycota</taxon>
        <taxon>Saccharomycotina</taxon>
        <taxon>Saccharomycetes</taxon>
        <taxon>Saccharomycetales</taxon>
        <taxon>Saccharomycetaceae</taxon>
        <taxon>Naumovozyma</taxon>
    </lineage>
</organism>
<comment type="function">
    <text evidence="1">Myosin heavy chain that is required for the cell cycle-regulated transport of various organelles and proteins for their segregation. Functions by binding with its tail domain to receptor proteins on organelles and exerting force with its N-terminal motor domain against actin filaments, thereby transporting its cargo along polarized actin cables (By similarity).</text>
</comment>
<comment type="subunit">
    <text evidence="1">Homodimer. Interacts with calmodulin (CMD1) and the myosin light chain MLC1 through its IQ repeats (By similarity).</text>
</comment>
<comment type="similarity">
    <text evidence="8">Belongs to the TRAFAC class myosin-kinesin ATPase superfamily. Myosin family.</text>
</comment>
<gene>
    <name type="primary">MYO2A</name>
    <name type="ordered locus">NCAS_0I00130</name>
</gene>